<name>GMHA_ECOHS</name>
<reference key="1">
    <citation type="journal article" date="2008" name="J. Bacteriol.">
        <title>The pangenome structure of Escherichia coli: comparative genomic analysis of E. coli commensal and pathogenic isolates.</title>
        <authorList>
            <person name="Rasko D.A."/>
            <person name="Rosovitz M.J."/>
            <person name="Myers G.S.A."/>
            <person name="Mongodin E.F."/>
            <person name="Fricke W.F."/>
            <person name="Gajer P."/>
            <person name="Crabtree J."/>
            <person name="Sebaihia M."/>
            <person name="Thomson N.R."/>
            <person name="Chaudhuri R."/>
            <person name="Henderson I.R."/>
            <person name="Sperandio V."/>
            <person name="Ravel J."/>
        </authorList>
    </citation>
    <scope>NUCLEOTIDE SEQUENCE [LARGE SCALE GENOMIC DNA]</scope>
    <source>
        <strain>HS</strain>
    </source>
</reference>
<feature type="chain" id="PRO_1000057450" description="Phosphoheptose isomerase">
    <location>
        <begin position="1"/>
        <end position="192"/>
    </location>
</feature>
<feature type="domain" description="SIS" evidence="1">
    <location>
        <begin position="37"/>
        <end position="192"/>
    </location>
</feature>
<feature type="binding site" evidence="1">
    <location>
        <begin position="52"/>
        <end position="54"/>
    </location>
    <ligand>
        <name>substrate</name>
    </ligand>
</feature>
<feature type="binding site" evidence="1">
    <location>
        <position position="61"/>
    </location>
    <ligand>
        <name>Zn(2+)</name>
        <dbReference type="ChEBI" id="CHEBI:29105"/>
    </ligand>
</feature>
<feature type="binding site" evidence="1">
    <location>
        <position position="65"/>
    </location>
    <ligand>
        <name>substrate</name>
    </ligand>
</feature>
<feature type="binding site" evidence="1">
    <location>
        <position position="65"/>
    </location>
    <ligand>
        <name>Zn(2+)</name>
        <dbReference type="ChEBI" id="CHEBI:29105"/>
    </ligand>
</feature>
<feature type="binding site" evidence="1">
    <location>
        <begin position="93"/>
        <end position="94"/>
    </location>
    <ligand>
        <name>substrate</name>
    </ligand>
</feature>
<feature type="binding site" evidence="1">
    <location>
        <begin position="119"/>
        <end position="121"/>
    </location>
    <ligand>
        <name>substrate</name>
    </ligand>
</feature>
<feature type="binding site" evidence="1">
    <location>
        <position position="124"/>
    </location>
    <ligand>
        <name>substrate</name>
    </ligand>
</feature>
<feature type="binding site" evidence="1">
    <location>
        <position position="172"/>
    </location>
    <ligand>
        <name>substrate</name>
    </ligand>
</feature>
<feature type="binding site" evidence="1">
    <location>
        <position position="172"/>
    </location>
    <ligand>
        <name>Zn(2+)</name>
        <dbReference type="ChEBI" id="CHEBI:29105"/>
    </ligand>
</feature>
<feature type="binding site" evidence="1">
    <location>
        <position position="180"/>
    </location>
    <ligand>
        <name>Zn(2+)</name>
        <dbReference type="ChEBI" id="CHEBI:29105"/>
    </ligand>
</feature>
<gene>
    <name evidence="1" type="primary">gmhA</name>
    <name type="ordered locus">EcHS_A0250</name>
</gene>
<evidence type="ECO:0000255" key="1">
    <source>
        <dbReference type="HAMAP-Rule" id="MF_00067"/>
    </source>
</evidence>
<keyword id="KW-0119">Carbohydrate metabolism</keyword>
<keyword id="KW-0963">Cytoplasm</keyword>
<keyword id="KW-0413">Isomerase</keyword>
<keyword id="KW-0479">Metal-binding</keyword>
<keyword id="KW-0862">Zinc</keyword>
<organism>
    <name type="scientific">Escherichia coli O9:H4 (strain HS)</name>
    <dbReference type="NCBI Taxonomy" id="331112"/>
    <lineage>
        <taxon>Bacteria</taxon>
        <taxon>Pseudomonadati</taxon>
        <taxon>Pseudomonadota</taxon>
        <taxon>Gammaproteobacteria</taxon>
        <taxon>Enterobacterales</taxon>
        <taxon>Enterobacteriaceae</taxon>
        <taxon>Escherichia</taxon>
    </lineage>
</organism>
<proteinExistence type="inferred from homology"/>
<sequence length="192" mass="20815">MYQDLIRNELNEAAETLANFLKDDANIHAIQRAAVLLADSFKAGGKVLSCGNGGSHCDAMHFAEELTGRYRENRPGYPAIAISDVSHISCVGNDFGFNDIFSRYVEAVGREGDVLLGISTSGNSANVIKAIAAAREKGMKVITLTGKDGGKMAGTADIEIRVPHFGYADRIQEIHIKVIHILIQLIEKEMVK</sequence>
<comment type="function">
    <text evidence="1">Catalyzes the isomerization of sedoheptulose 7-phosphate in D-glycero-D-manno-heptose 7-phosphate.</text>
</comment>
<comment type="catalytic activity">
    <reaction evidence="1">
        <text>2 D-sedoheptulose 7-phosphate = D-glycero-alpha-D-manno-heptose 7-phosphate + D-glycero-beta-D-manno-heptose 7-phosphate</text>
        <dbReference type="Rhea" id="RHEA:27489"/>
        <dbReference type="ChEBI" id="CHEBI:57483"/>
        <dbReference type="ChEBI" id="CHEBI:60203"/>
        <dbReference type="ChEBI" id="CHEBI:60204"/>
        <dbReference type="EC" id="5.3.1.28"/>
    </reaction>
</comment>
<comment type="cofactor">
    <cofactor evidence="1">
        <name>Zn(2+)</name>
        <dbReference type="ChEBI" id="CHEBI:29105"/>
    </cofactor>
    <text evidence="1">Binds 1 zinc ion per subunit.</text>
</comment>
<comment type="pathway">
    <text evidence="1">Carbohydrate biosynthesis; D-glycero-D-manno-heptose 7-phosphate biosynthesis; D-glycero-alpha-D-manno-heptose 7-phosphate and D-glycero-beta-D-manno-heptose 7-phosphate from sedoheptulose 7-phosphate: step 1/1.</text>
</comment>
<comment type="subunit">
    <text evidence="1">Homotetramer.</text>
</comment>
<comment type="subcellular location">
    <subcellularLocation>
        <location evidence="1">Cytoplasm</location>
    </subcellularLocation>
</comment>
<comment type="miscellaneous">
    <text evidence="1">The reaction produces a racemic mixture of D-glycero-alpha-D-manno-heptose 7-phosphate and D-glycero-beta-D-manno-heptose 7-phosphate.</text>
</comment>
<comment type="similarity">
    <text evidence="1">Belongs to the SIS family. GmhA subfamily.</text>
</comment>
<dbReference type="EC" id="5.3.1.28" evidence="1"/>
<dbReference type="EMBL" id="CP000802">
    <property type="protein sequence ID" value="ABV04640.1"/>
    <property type="molecule type" value="Genomic_DNA"/>
</dbReference>
<dbReference type="SMR" id="A7ZWI6"/>
<dbReference type="KEGG" id="ecx:EcHS_A0250"/>
<dbReference type="HOGENOM" id="CLU_080999_4_0_6"/>
<dbReference type="UniPathway" id="UPA00041">
    <property type="reaction ID" value="UER00436"/>
</dbReference>
<dbReference type="GO" id="GO:0005737">
    <property type="term" value="C:cytoplasm"/>
    <property type="evidence" value="ECO:0007669"/>
    <property type="project" value="UniProtKB-SubCell"/>
</dbReference>
<dbReference type="GO" id="GO:0097367">
    <property type="term" value="F:carbohydrate derivative binding"/>
    <property type="evidence" value="ECO:0007669"/>
    <property type="project" value="InterPro"/>
</dbReference>
<dbReference type="GO" id="GO:0008968">
    <property type="term" value="F:D-sedoheptulose 7-phosphate isomerase activity"/>
    <property type="evidence" value="ECO:0007669"/>
    <property type="project" value="UniProtKB-UniRule"/>
</dbReference>
<dbReference type="GO" id="GO:0008270">
    <property type="term" value="F:zinc ion binding"/>
    <property type="evidence" value="ECO:0007669"/>
    <property type="project" value="UniProtKB-UniRule"/>
</dbReference>
<dbReference type="GO" id="GO:0005975">
    <property type="term" value="P:carbohydrate metabolic process"/>
    <property type="evidence" value="ECO:0007669"/>
    <property type="project" value="UniProtKB-UniRule"/>
</dbReference>
<dbReference type="GO" id="GO:2001061">
    <property type="term" value="P:D-glycero-D-manno-heptose 7-phosphate biosynthetic process"/>
    <property type="evidence" value="ECO:0007669"/>
    <property type="project" value="UniProtKB-UniPathway"/>
</dbReference>
<dbReference type="CDD" id="cd05006">
    <property type="entry name" value="SIS_GmhA"/>
    <property type="match status" value="1"/>
</dbReference>
<dbReference type="FunFam" id="3.40.50.10490:FF:000013">
    <property type="entry name" value="Phosphoheptose isomerase"/>
    <property type="match status" value="1"/>
</dbReference>
<dbReference type="Gene3D" id="3.40.50.10490">
    <property type="entry name" value="Glucose-6-phosphate isomerase like protein, domain 1"/>
    <property type="match status" value="1"/>
</dbReference>
<dbReference type="HAMAP" id="MF_00067">
    <property type="entry name" value="GmhA"/>
    <property type="match status" value="1"/>
</dbReference>
<dbReference type="InterPro" id="IPR035461">
    <property type="entry name" value="GmhA/DiaA"/>
</dbReference>
<dbReference type="InterPro" id="IPR004515">
    <property type="entry name" value="Phosphoheptose_Isoase"/>
</dbReference>
<dbReference type="InterPro" id="IPR001347">
    <property type="entry name" value="SIS_dom"/>
</dbReference>
<dbReference type="InterPro" id="IPR046348">
    <property type="entry name" value="SIS_dom_sf"/>
</dbReference>
<dbReference type="InterPro" id="IPR050099">
    <property type="entry name" value="SIS_GmhA/DiaA_subfam"/>
</dbReference>
<dbReference type="NCBIfam" id="TIGR00441">
    <property type="entry name" value="gmhA"/>
    <property type="match status" value="1"/>
</dbReference>
<dbReference type="NCBIfam" id="NF001628">
    <property type="entry name" value="PRK00414.1"/>
    <property type="match status" value="1"/>
</dbReference>
<dbReference type="PANTHER" id="PTHR30390:SF7">
    <property type="entry name" value="PHOSPHOHEPTOSE ISOMERASE"/>
    <property type="match status" value="1"/>
</dbReference>
<dbReference type="PANTHER" id="PTHR30390">
    <property type="entry name" value="SEDOHEPTULOSE 7-PHOSPHATE ISOMERASE / DNAA INITIATOR-ASSOCIATING FACTOR FOR REPLICATION INITIATION"/>
    <property type="match status" value="1"/>
</dbReference>
<dbReference type="Pfam" id="PF13580">
    <property type="entry name" value="SIS_2"/>
    <property type="match status" value="1"/>
</dbReference>
<dbReference type="SUPFAM" id="SSF53697">
    <property type="entry name" value="SIS domain"/>
    <property type="match status" value="1"/>
</dbReference>
<dbReference type="PROSITE" id="PS51464">
    <property type="entry name" value="SIS"/>
    <property type="match status" value="1"/>
</dbReference>
<protein>
    <recommendedName>
        <fullName evidence="1">Phosphoheptose isomerase</fullName>
        <ecNumber evidence="1">5.3.1.28</ecNumber>
    </recommendedName>
    <alternativeName>
        <fullName evidence="1">Sedoheptulose 7-phosphate isomerase</fullName>
    </alternativeName>
</protein>
<accession>A7ZWI6</accession>